<reference key="1">
    <citation type="submission" date="2005-10" db="EMBL/GenBank/DDBJ databases">
        <authorList>
            <person name="Ji Y."/>
            <person name="Bennett B.M."/>
        </authorList>
    </citation>
    <scope>NUCLEOTIDE SEQUENCE [MRNA]</scope>
</reference>
<organism>
    <name type="scientific">Sus scrofa</name>
    <name type="common">Pig</name>
    <dbReference type="NCBI Taxonomy" id="9823"/>
    <lineage>
        <taxon>Eukaryota</taxon>
        <taxon>Metazoa</taxon>
        <taxon>Chordata</taxon>
        <taxon>Craniata</taxon>
        <taxon>Vertebrata</taxon>
        <taxon>Euteleostomi</taxon>
        <taxon>Mammalia</taxon>
        <taxon>Eutheria</taxon>
        <taxon>Laurasiatheria</taxon>
        <taxon>Artiodactyla</taxon>
        <taxon>Suina</taxon>
        <taxon>Suidae</taxon>
        <taxon>Sus</taxon>
    </lineage>
</organism>
<gene>
    <name type="primary">ALDH2</name>
</gene>
<feature type="transit peptide" description="Mitochondrion" evidence="1">
    <location>
        <begin position="1"/>
        <end position="21"/>
    </location>
</feature>
<feature type="chain" id="PRO_0000312492" description="Aldehyde dehydrogenase, mitochondrial">
    <location>
        <begin position="22"/>
        <end position="521"/>
    </location>
</feature>
<feature type="short sequence motif" description="SIFI-degron" evidence="2">
    <location>
        <begin position="13"/>
        <end position="28"/>
    </location>
</feature>
<feature type="active site" description="Proton acceptor" evidence="5 6">
    <location>
        <position position="289"/>
    </location>
</feature>
<feature type="active site" description="Nucleophile" evidence="5 6">
    <location>
        <position position="323"/>
    </location>
</feature>
<feature type="binding site" evidence="1">
    <location>
        <begin position="266"/>
        <end position="271"/>
    </location>
    <ligand>
        <name>NAD(+)</name>
        <dbReference type="ChEBI" id="CHEBI:57540"/>
    </ligand>
</feature>
<feature type="site" description="Transition state stabilizer" evidence="3">
    <location>
        <position position="190"/>
    </location>
</feature>
<feature type="modified residue" description="N6-acetyllysine" evidence="4">
    <location>
        <position position="56"/>
    </location>
</feature>
<feature type="modified residue" description="N6-acetyllysine" evidence="4">
    <location>
        <position position="77"/>
    </location>
</feature>
<feature type="modified residue" description="N6-acetyllysine" evidence="4">
    <location>
        <position position="163"/>
    </location>
</feature>
<feature type="modified residue" description="N6-acetyllysine" evidence="4">
    <location>
        <position position="372"/>
    </location>
</feature>
<feature type="modified residue" description="N6-acetyllysine" evidence="4">
    <location>
        <position position="379"/>
    </location>
</feature>
<feature type="modified residue" description="N6-acetyllysine" evidence="4">
    <location>
        <position position="387"/>
    </location>
</feature>
<feature type="modified residue" description="N6-acetyllysine" evidence="4">
    <location>
        <position position="430"/>
    </location>
</feature>
<feature type="modified residue" description="N6-acetyllysine" evidence="4">
    <location>
        <position position="432"/>
    </location>
</feature>
<feature type="modified residue" description="N6-acetyllysine" evidence="4">
    <location>
        <position position="445"/>
    </location>
</feature>
<feature type="modified residue" description="N6-acetyllysine" evidence="4">
    <location>
        <position position="455"/>
    </location>
</feature>
<comment type="function">
    <text evidence="2">Required for clearance of cellular formaldehyde, a cytotoxic and carcinogenic metabolite that induces DNA damage.</text>
</comment>
<comment type="catalytic activity">
    <reaction>
        <text>an aldehyde + NAD(+) + H2O = a carboxylate + NADH + 2 H(+)</text>
        <dbReference type="Rhea" id="RHEA:16185"/>
        <dbReference type="ChEBI" id="CHEBI:15377"/>
        <dbReference type="ChEBI" id="CHEBI:15378"/>
        <dbReference type="ChEBI" id="CHEBI:17478"/>
        <dbReference type="ChEBI" id="CHEBI:29067"/>
        <dbReference type="ChEBI" id="CHEBI:57540"/>
        <dbReference type="ChEBI" id="CHEBI:57945"/>
        <dbReference type="EC" id="1.2.1.3"/>
    </reaction>
</comment>
<comment type="pathway">
    <text>Alcohol metabolism; ethanol degradation; acetate from ethanol: step 2/2.</text>
</comment>
<comment type="subunit">
    <text evidence="1">Homotetramer.</text>
</comment>
<comment type="subcellular location">
    <subcellularLocation>
        <location evidence="1">Mitochondrion matrix</location>
    </subcellularLocation>
</comment>
<comment type="PTM">
    <text evidence="2">In response to mitochondrial stress, the precursor protein is ubiquitinated by the SIFI complex in the cytoplasm before mitochondrial import, leading to its degradation. Within the SIFI complex, UBR4 initiates ubiquitin chain that are further elongated or branched by KCMF1.</text>
</comment>
<comment type="similarity">
    <text evidence="7">Belongs to the aldehyde dehydrogenase family.</text>
</comment>
<protein>
    <recommendedName>
        <fullName>Aldehyde dehydrogenase, mitochondrial</fullName>
        <ecNumber>1.2.1.3</ecNumber>
    </recommendedName>
    <alternativeName>
        <fullName>ALDH class 2</fullName>
    </alternativeName>
    <alternativeName>
        <fullName>ALDH-E2</fullName>
    </alternativeName>
</protein>
<evidence type="ECO:0000250" key="1"/>
<evidence type="ECO:0000250" key="2">
    <source>
        <dbReference type="UniProtKB" id="P05091"/>
    </source>
</evidence>
<evidence type="ECO:0000250" key="3">
    <source>
        <dbReference type="UniProtKB" id="P20000"/>
    </source>
</evidence>
<evidence type="ECO:0000250" key="4">
    <source>
        <dbReference type="UniProtKB" id="P47738"/>
    </source>
</evidence>
<evidence type="ECO:0000255" key="5">
    <source>
        <dbReference type="PROSITE-ProRule" id="PRU10007"/>
    </source>
</evidence>
<evidence type="ECO:0000255" key="6">
    <source>
        <dbReference type="PROSITE-ProRule" id="PRU10008"/>
    </source>
</evidence>
<evidence type="ECO:0000305" key="7"/>
<dbReference type="EC" id="1.2.1.3"/>
<dbReference type="EMBL" id="DQ266356">
    <property type="protein sequence ID" value="ABB70228.1"/>
    <property type="molecule type" value="mRNA"/>
</dbReference>
<dbReference type="RefSeq" id="NP_001038076.1">
    <property type="nucleotide sequence ID" value="NM_001044611.2"/>
</dbReference>
<dbReference type="SMR" id="Q2XQV4"/>
<dbReference type="FunCoup" id="Q2XQV4">
    <property type="interactions" value="1386"/>
</dbReference>
<dbReference type="STRING" id="9823.ENSSSCP00000010556"/>
<dbReference type="GlyGen" id="Q2XQV4">
    <property type="glycosylation" value="1 site"/>
</dbReference>
<dbReference type="PaxDb" id="9823-ENSSSCP00000010556"/>
<dbReference type="PeptideAtlas" id="Q2XQV4"/>
<dbReference type="Ensembl" id="ENSSSCT00000055390.2">
    <property type="protein sequence ID" value="ENSSSCP00000053451.1"/>
    <property type="gene ID" value="ENSSSCG00000009889.5"/>
</dbReference>
<dbReference type="Ensembl" id="ENSSSCT00025069501.1">
    <property type="protein sequence ID" value="ENSSSCP00025029933.1"/>
    <property type="gene ID" value="ENSSSCG00025050497.1"/>
</dbReference>
<dbReference type="Ensembl" id="ENSSSCT00035044779.1">
    <property type="protein sequence ID" value="ENSSSCP00035017930.1"/>
    <property type="gene ID" value="ENSSSCG00035033776.1"/>
</dbReference>
<dbReference type="Ensembl" id="ENSSSCT00040009144.1">
    <property type="protein sequence ID" value="ENSSSCP00040003586.1"/>
    <property type="gene ID" value="ENSSSCG00040006895.1"/>
</dbReference>
<dbReference type="Ensembl" id="ENSSSCT00045006276.1">
    <property type="protein sequence ID" value="ENSSSCP00045004257.1"/>
    <property type="gene ID" value="ENSSSCG00045003770.1"/>
</dbReference>
<dbReference type="Ensembl" id="ENSSSCT00055023290.1">
    <property type="protein sequence ID" value="ENSSSCP00055018413.1"/>
    <property type="gene ID" value="ENSSSCG00055011877.1"/>
</dbReference>
<dbReference type="Ensembl" id="ENSSSCT00060076086.1">
    <property type="protein sequence ID" value="ENSSSCP00060032896.1"/>
    <property type="gene ID" value="ENSSSCG00060055813.1"/>
</dbReference>
<dbReference type="Ensembl" id="ENSSSCT00065034412.1">
    <property type="protein sequence ID" value="ENSSSCP00065014281.1"/>
    <property type="gene ID" value="ENSSSCG00065025693.1"/>
</dbReference>
<dbReference type="Ensembl" id="ENSSSCT00070014826.1">
    <property type="protein sequence ID" value="ENSSSCP00070012258.1"/>
    <property type="gene ID" value="ENSSSCG00070007644.1"/>
</dbReference>
<dbReference type="Ensembl" id="ENSSSCT00110075817">
    <property type="protein sequence ID" value="ENSSSCP00110053487"/>
    <property type="gene ID" value="ENSSSCG00110039741"/>
</dbReference>
<dbReference type="Ensembl" id="ENSSSCT00115006048">
    <property type="protein sequence ID" value="ENSSSCP00115005641"/>
    <property type="gene ID" value="ENSSSCG00115003555"/>
</dbReference>
<dbReference type="Ensembl" id="ENSSSCT00130072760">
    <property type="protein sequence ID" value="ENSSSCP00130052464"/>
    <property type="gene ID" value="ENSSSCG00130037255"/>
</dbReference>
<dbReference type="GeneID" id="733685"/>
<dbReference type="KEGG" id="ssc:733685"/>
<dbReference type="CTD" id="217"/>
<dbReference type="VGNC" id="VGNC:106442">
    <property type="gene designation" value="ALDH2"/>
</dbReference>
<dbReference type="eggNOG" id="KOG2450">
    <property type="taxonomic scope" value="Eukaryota"/>
</dbReference>
<dbReference type="GeneTree" id="ENSGT00940000156240"/>
<dbReference type="HOGENOM" id="CLU_005391_0_1_1"/>
<dbReference type="InParanoid" id="Q2XQV4"/>
<dbReference type="OMA" id="GQLIMQY"/>
<dbReference type="OrthoDB" id="310895at2759"/>
<dbReference type="TreeFam" id="TF300455"/>
<dbReference type="Reactome" id="R-SSC-380612">
    <property type="pathway name" value="Metabolism of serotonin"/>
</dbReference>
<dbReference type="Reactome" id="R-SSC-445355">
    <property type="pathway name" value="Smooth Muscle Contraction"/>
</dbReference>
<dbReference type="Reactome" id="R-SSC-71384">
    <property type="pathway name" value="Ethanol oxidation"/>
</dbReference>
<dbReference type="Reactome" id="R-SSC-9837999">
    <property type="pathway name" value="Mitochondrial protein degradation"/>
</dbReference>
<dbReference type="UniPathway" id="UPA00780">
    <property type="reaction ID" value="UER00768"/>
</dbReference>
<dbReference type="Proteomes" id="UP000008227">
    <property type="component" value="Chromosome 14"/>
</dbReference>
<dbReference type="Proteomes" id="UP000314985">
    <property type="component" value="Chromosome 14"/>
</dbReference>
<dbReference type="Proteomes" id="UP000694570">
    <property type="component" value="Unplaced"/>
</dbReference>
<dbReference type="Proteomes" id="UP000694571">
    <property type="component" value="Unplaced"/>
</dbReference>
<dbReference type="Proteomes" id="UP000694720">
    <property type="component" value="Unplaced"/>
</dbReference>
<dbReference type="Proteomes" id="UP000694722">
    <property type="component" value="Unplaced"/>
</dbReference>
<dbReference type="Proteomes" id="UP000694723">
    <property type="component" value="Unplaced"/>
</dbReference>
<dbReference type="Proteomes" id="UP000694724">
    <property type="component" value="Unplaced"/>
</dbReference>
<dbReference type="Proteomes" id="UP000694725">
    <property type="component" value="Unplaced"/>
</dbReference>
<dbReference type="Proteomes" id="UP000694726">
    <property type="component" value="Unplaced"/>
</dbReference>
<dbReference type="Proteomes" id="UP000694727">
    <property type="component" value="Unplaced"/>
</dbReference>
<dbReference type="Proteomes" id="UP000694728">
    <property type="component" value="Unplaced"/>
</dbReference>
<dbReference type="Bgee" id="ENSSSCG00000009889">
    <property type="expression patterns" value="Expressed in liver and 47 other cell types or tissues"/>
</dbReference>
<dbReference type="ExpressionAtlas" id="Q2XQV4">
    <property type="expression patterns" value="baseline and differential"/>
</dbReference>
<dbReference type="GO" id="GO:0005759">
    <property type="term" value="C:mitochondrial matrix"/>
    <property type="evidence" value="ECO:0007669"/>
    <property type="project" value="UniProtKB-SubCell"/>
</dbReference>
<dbReference type="GO" id="GO:0005739">
    <property type="term" value="C:mitochondrion"/>
    <property type="evidence" value="ECO:0000250"/>
    <property type="project" value="UniProtKB"/>
</dbReference>
<dbReference type="GO" id="GO:0004029">
    <property type="term" value="F:aldehyde dehydrogenase (NAD+) activity"/>
    <property type="evidence" value="ECO:0000250"/>
    <property type="project" value="UniProtKB"/>
</dbReference>
<dbReference type="GO" id="GO:0106435">
    <property type="term" value="F:carboxylesterase activity"/>
    <property type="evidence" value="ECO:0000250"/>
    <property type="project" value="UniProtKB"/>
</dbReference>
<dbReference type="GO" id="GO:0008957">
    <property type="term" value="F:phenylacetaldehyde dehydrogenase (NAD+) activity"/>
    <property type="evidence" value="ECO:0000250"/>
    <property type="project" value="UniProtKB"/>
</dbReference>
<dbReference type="GO" id="GO:0046185">
    <property type="term" value="P:aldehyde catabolic process"/>
    <property type="evidence" value="ECO:0000250"/>
    <property type="project" value="UniProtKB"/>
</dbReference>
<dbReference type="GO" id="GO:0006068">
    <property type="term" value="P:ethanol catabolic process"/>
    <property type="evidence" value="ECO:0007669"/>
    <property type="project" value="UniProtKB-UniPathway"/>
</dbReference>
<dbReference type="GO" id="GO:0018937">
    <property type="term" value="P:nitroglycerin metabolic process"/>
    <property type="evidence" value="ECO:0000250"/>
    <property type="project" value="UniProtKB"/>
</dbReference>
<dbReference type="GO" id="GO:1903179">
    <property type="term" value="P:regulation of dopamine biosynthetic process"/>
    <property type="evidence" value="ECO:0000250"/>
    <property type="project" value="UniProtKB"/>
</dbReference>
<dbReference type="GO" id="GO:1905627">
    <property type="term" value="P:regulation of serotonin biosynthetic process"/>
    <property type="evidence" value="ECO:0000250"/>
    <property type="project" value="UniProtKB"/>
</dbReference>
<dbReference type="CDD" id="cd07141">
    <property type="entry name" value="ALDH_F1AB_F2_RALDH1"/>
    <property type="match status" value="1"/>
</dbReference>
<dbReference type="FunFam" id="3.40.605.10:FF:000029">
    <property type="entry name" value="Aldehyde dehydrogenase, mitochondrial"/>
    <property type="match status" value="1"/>
</dbReference>
<dbReference type="FunFam" id="3.40.309.10:FF:000001">
    <property type="entry name" value="Mitochondrial aldehyde dehydrogenase 2"/>
    <property type="match status" value="1"/>
</dbReference>
<dbReference type="Gene3D" id="3.40.605.10">
    <property type="entry name" value="Aldehyde Dehydrogenase, Chain A, domain 1"/>
    <property type="match status" value="1"/>
</dbReference>
<dbReference type="Gene3D" id="3.40.309.10">
    <property type="entry name" value="Aldehyde Dehydrogenase, Chain A, domain 2"/>
    <property type="match status" value="1"/>
</dbReference>
<dbReference type="InterPro" id="IPR016161">
    <property type="entry name" value="Ald_DH/histidinol_DH"/>
</dbReference>
<dbReference type="InterPro" id="IPR016163">
    <property type="entry name" value="Ald_DH_C"/>
</dbReference>
<dbReference type="InterPro" id="IPR016160">
    <property type="entry name" value="Ald_DH_CS_CYS"/>
</dbReference>
<dbReference type="InterPro" id="IPR029510">
    <property type="entry name" value="Ald_DH_CS_GLU"/>
</dbReference>
<dbReference type="InterPro" id="IPR016162">
    <property type="entry name" value="Ald_DH_N"/>
</dbReference>
<dbReference type="InterPro" id="IPR015590">
    <property type="entry name" value="Aldehyde_DH_dom"/>
</dbReference>
<dbReference type="PANTHER" id="PTHR11699">
    <property type="entry name" value="ALDEHYDE DEHYDROGENASE-RELATED"/>
    <property type="match status" value="1"/>
</dbReference>
<dbReference type="Pfam" id="PF00171">
    <property type="entry name" value="Aldedh"/>
    <property type="match status" value="1"/>
</dbReference>
<dbReference type="SUPFAM" id="SSF53720">
    <property type="entry name" value="ALDH-like"/>
    <property type="match status" value="1"/>
</dbReference>
<dbReference type="PROSITE" id="PS00070">
    <property type="entry name" value="ALDEHYDE_DEHYDR_CYS"/>
    <property type="match status" value="1"/>
</dbReference>
<dbReference type="PROSITE" id="PS00687">
    <property type="entry name" value="ALDEHYDE_DEHYDR_GLU"/>
    <property type="match status" value="1"/>
</dbReference>
<proteinExistence type="evidence at transcript level"/>
<keyword id="KW-0007">Acetylation</keyword>
<keyword id="KW-0496">Mitochondrion</keyword>
<keyword id="KW-0520">NAD</keyword>
<keyword id="KW-0560">Oxidoreductase</keyword>
<keyword id="KW-1185">Reference proteome</keyword>
<keyword id="KW-0809">Transit peptide</keyword>
<keyword id="KW-0832">Ubl conjugation</keyword>
<sequence>MLRPAALAAARLVLRQGRRLLSAAPTQAVPAPNQQPEIFYNQIFINNEWHDAISKKTFPTVNPSTGDVICHVAEGDKEDVDRAVEAARAAFQLGSPWRRLDASDRGRLLNRLADLIERDRTYLAALETLDNGKPYVISYLVDLDMVLKCLRYYAGWADKYHGKTLPIDGDYFSYTRHEPVGVCGQIIPWNFPLLMQAWKLGPALATGNVVVMKVSEQTPLTALYVANLIKEAGFPPGVVNIVPGYGPTAGAAIASHEDVDKVAFTGSTEVGHLIQVAAGKSNLKRVTLELGGKSPNIIMSDADMDWAVEQAHFALFFNQGQCCCAGSRTFVQEDIYAEFVERSVARARSRVVGNPFDSRTEQGPQIDETQFKKILGYIKSGKEEGAKLLCGGGAAADRGYFIQPTVFGDVQDGMTIAKEEIFGPVMQILKFKTIEEVIGRANNSKYGLAAAVFTKDLDKANYLSQALQAGTVWVNCYDVFGAQSPFGGYKLSGSGRELGEYGLQAYTEVKTVTVKVPQKNS</sequence>
<accession>Q2XQV4</accession>
<name>ALDH2_PIG</name>